<keyword id="KW-0997">Cell inner membrane</keyword>
<keyword id="KW-1003">Cell membrane</keyword>
<keyword id="KW-0472">Membrane</keyword>
<keyword id="KW-0520">NAD</keyword>
<keyword id="KW-0874">Quinone</keyword>
<keyword id="KW-1278">Translocase</keyword>
<keyword id="KW-0813">Transport</keyword>
<keyword id="KW-0830">Ubiquinone</keyword>
<comment type="function">
    <text evidence="1">NDH-1 shuttles electrons from NADH, via FMN and iron-sulfur (Fe-S) centers, to quinones in the respiratory chain. The immediate electron acceptor for the enzyme in this species is believed to be ubiquinone. Couples the redox reaction to proton translocation (for every two electrons transferred, four hydrogen ions are translocated across the cytoplasmic membrane), and thus conserves the redox energy in a proton gradient.</text>
</comment>
<comment type="catalytic activity">
    <reaction evidence="1">
        <text>a quinone + NADH + 5 H(+)(in) = a quinol + NAD(+) + 4 H(+)(out)</text>
        <dbReference type="Rhea" id="RHEA:57888"/>
        <dbReference type="ChEBI" id="CHEBI:15378"/>
        <dbReference type="ChEBI" id="CHEBI:24646"/>
        <dbReference type="ChEBI" id="CHEBI:57540"/>
        <dbReference type="ChEBI" id="CHEBI:57945"/>
        <dbReference type="ChEBI" id="CHEBI:132124"/>
    </reaction>
</comment>
<comment type="subunit">
    <text evidence="1">NDH-1 is composed of 14 different subunits. Subunits NuoB, C, D, E, F, and G constitute the peripheral sector of the complex.</text>
</comment>
<comment type="subcellular location">
    <subcellularLocation>
        <location evidence="1">Cell inner membrane</location>
        <topology evidence="1">Peripheral membrane protein</topology>
        <orientation evidence="1">Cytoplasmic side</orientation>
    </subcellularLocation>
</comment>
<comment type="similarity">
    <text evidence="1">Belongs to the complex I 30 kDa subunit family.</text>
</comment>
<organism>
    <name type="scientific">Hydrogenovibrio crunogenus (strain DSM 25203 / XCL-2)</name>
    <name type="common">Thiomicrospira crunogena</name>
    <dbReference type="NCBI Taxonomy" id="317025"/>
    <lineage>
        <taxon>Bacteria</taxon>
        <taxon>Pseudomonadati</taxon>
        <taxon>Pseudomonadota</taxon>
        <taxon>Gammaproteobacteria</taxon>
        <taxon>Thiotrichales</taxon>
        <taxon>Piscirickettsiaceae</taxon>
        <taxon>Hydrogenovibrio</taxon>
    </lineage>
</organism>
<protein>
    <recommendedName>
        <fullName evidence="1">NADH-quinone oxidoreductase subunit C</fullName>
        <ecNumber evidence="1">7.1.1.-</ecNumber>
    </recommendedName>
    <alternativeName>
        <fullName evidence="1">NADH dehydrogenase I subunit C</fullName>
    </alternativeName>
    <alternativeName>
        <fullName evidence="1">NDH-1 subunit C</fullName>
    </alternativeName>
</protein>
<proteinExistence type="inferred from homology"/>
<reference key="1">
    <citation type="journal article" date="2006" name="PLoS Biol.">
        <title>The genome of deep-sea vent chemolithoautotroph Thiomicrospira crunogena XCL-2.</title>
        <authorList>
            <person name="Scott K.M."/>
            <person name="Sievert S.M."/>
            <person name="Abril F.N."/>
            <person name="Ball L.A."/>
            <person name="Barrett C.J."/>
            <person name="Blake R.A."/>
            <person name="Boller A.J."/>
            <person name="Chain P.S.G."/>
            <person name="Clark J.A."/>
            <person name="Davis C.R."/>
            <person name="Detter C."/>
            <person name="Do K.F."/>
            <person name="Dobrinski K.P."/>
            <person name="Faza B.I."/>
            <person name="Fitzpatrick K.A."/>
            <person name="Freyermuth S.K."/>
            <person name="Harmer T.L."/>
            <person name="Hauser L.J."/>
            <person name="Huegler M."/>
            <person name="Kerfeld C.A."/>
            <person name="Klotz M.G."/>
            <person name="Kong W.W."/>
            <person name="Land M."/>
            <person name="Lapidus A."/>
            <person name="Larimer F.W."/>
            <person name="Longo D.L."/>
            <person name="Lucas S."/>
            <person name="Malfatti S.A."/>
            <person name="Massey S.E."/>
            <person name="Martin D.D."/>
            <person name="McCuddin Z."/>
            <person name="Meyer F."/>
            <person name="Moore J.L."/>
            <person name="Ocampo L.H. Jr."/>
            <person name="Paul J.H."/>
            <person name="Paulsen I.T."/>
            <person name="Reep D.K."/>
            <person name="Ren Q."/>
            <person name="Ross R.L."/>
            <person name="Sato P.Y."/>
            <person name="Thomas P."/>
            <person name="Tinkham L.E."/>
            <person name="Zeruth G.T."/>
        </authorList>
    </citation>
    <scope>NUCLEOTIDE SEQUENCE [LARGE SCALE GENOMIC DNA]</scope>
    <source>
        <strain>DSM 25203 / XCL-2</strain>
    </source>
</reference>
<gene>
    <name evidence="1" type="primary">nuoC</name>
    <name type="ordered locus">Tcr_0819</name>
</gene>
<name>NUOC_HYDCU</name>
<sequence>MKQSVLDLQATIQETLGDAIVVSDIKLDELTVELAPEQSLSALTKLKEKLGFDQLIDVCGVDYLAFGDVTWETRKATNSGFSRGVFDFAEEDGEADTNIPRRFAVVYHLLSVENNRRVRVKVYPEDTQMPMVDSVVSVWNCADWFEREAFDLFGILFNGHPDLRRILTDYGFVGHPLRKDFPLTGHVEMRYDAEKGRVVYEPVTIENRVNVPRVIRNDVEPKG</sequence>
<evidence type="ECO:0000255" key="1">
    <source>
        <dbReference type="HAMAP-Rule" id="MF_01357"/>
    </source>
</evidence>
<feature type="chain" id="PRO_0000358217" description="NADH-quinone oxidoreductase subunit C">
    <location>
        <begin position="1"/>
        <end position="223"/>
    </location>
</feature>
<dbReference type="EC" id="7.1.1.-" evidence="1"/>
<dbReference type="EMBL" id="CP000109">
    <property type="protein sequence ID" value="ABB41415.1"/>
    <property type="molecule type" value="Genomic_DNA"/>
</dbReference>
<dbReference type="SMR" id="Q31HF8"/>
<dbReference type="STRING" id="317025.Tcr_0819"/>
<dbReference type="KEGG" id="tcx:Tcr_0819"/>
<dbReference type="eggNOG" id="COG0852">
    <property type="taxonomic scope" value="Bacteria"/>
</dbReference>
<dbReference type="HOGENOM" id="CLU_042628_2_1_6"/>
<dbReference type="OrthoDB" id="9803286at2"/>
<dbReference type="GO" id="GO:0005886">
    <property type="term" value="C:plasma membrane"/>
    <property type="evidence" value="ECO:0007669"/>
    <property type="project" value="UniProtKB-SubCell"/>
</dbReference>
<dbReference type="GO" id="GO:0008137">
    <property type="term" value="F:NADH dehydrogenase (ubiquinone) activity"/>
    <property type="evidence" value="ECO:0007669"/>
    <property type="project" value="InterPro"/>
</dbReference>
<dbReference type="GO" id="GO:0050136">
    <property type="term" value="F:NADH:ubiquinone reductase (non-electrogenic) activity"/>
    <property type="evidence" value="ECO:0007669"/>
    <property type="project" value="UniProtKB-UniRule"/>
</dbReference>
<dbReference type="GO" id="GO:0048038">
    <property type="term" value="F:quinone binding"/>
    <property type="evidence" value="ECO:0007669"/>
    <property type="project" value="UniProtKB-KW"/>
</dbReference>
<dbReference type="Gene3D" id="3.30.460.80">
    <property type="entry name" value="NADH:ubiquinone oxidoreductase, 30kDa subunit"/>
    <property type="match status" value="1"/>
</dbReference>
<dbReference type="HAMAP" id="MF_01357">
    <property type="entry name" value="NDH1_NuoC"/>
    <property type="match status" value="1"/>
</dbReference>
<dbReference type="InterPro" id="IPR010218">
    <property type="entry name" value="NADH_DH_suC"/>
</dbReference>
<dbReference type="InterPro" id="IPR037232">
    <property type="entry name" value="NADH_quin_OxRdtase_su_C/D-like"/>
</dbReference>
<dbReference type="InterPro" id="IPR001268">
    <property type="entry name" value="NADH_UbQ_OxRdtase_30kDa_su"/>
</dbReference>
<dbReference type="InterPro" id="IPR020396">
    <property type="entry name" value="NADH_UbQ_OxRdtase_CS"/>
</dbReference>
<dbReference type="NCBIfam" id="NF004730">
    <property type="entry name" value="PRK06074.1-1"/>
    <property type="match status" value="1"/>
</dbReference>
<dbReference type="PANTHER" id="PTHR10884:SF14">
    <property type="entry name" value="NADH DEHYDROGENASE [UBIQUINONE] IRON-SULFUR PROTEIN 3, MITOCHONDRIAL"/>
    <property type="match status" value="1"/>
</dbReference>
<dbReference type="PANTHER" id="PTHR10884">
    <property type="entry name" value="NADH DEHYDROGENASE UBIQUINONE IRON-SULFUR PROTEIN 3"/>
    <property type="match status" value="1"/>
</dbReference>
<dbReference type="Pfam" id="PF00329">
    <property type="entry name" value="Complex1_30kDa"/>
    <property type="match status" value="1"/>
</dbReference>
<dbReference type="SUPFAM" id="SSF143243">
    <property type="entry name" value="Nqo5-like"/>
    <property type="match status" value="1"/>
</dbReference>
<dbReference type="PROSITE" id="PS00542">
    <property type="entry name" value="COMPLEX1_30K"/>
    <property type="match status" value="1"/>
</dbReference>
<accession>Q31HF8</accession>